<reference key="1">
    <citation type="journal article" date="2006" name="J. Bacteriol.">
        <title>Chromosome rearrangement and diversification of Francisella tularensis revealed by the type B (OSU18) genome sequence.</title>
        <authorList>
            <person name="Petrosino J.F."/>
            <person name="Xiang Q."/>
            <person name="Karpathy S.E."/>
            <person name="Jiang H."/>
            <person name="Yerrapragada S."/>
            <person name="Liu Y."/>
            <person name="Gioia J."/>
            <person name="Hemphill L."/>
            <person name="Gonzalez A."/>
            <person name="Raghavan T.M."/>
            <person name="Uzman A."/>
            <person name="Fox G.E."/>
            <person name="Highlander S."/>
            <person name="Reichard M."/>
            <person name="Morton R.J."/>
            <person name="Clinkenbeard K.D."/>
            <person name="Weinstock G.M."/>
        </authorList>
    </citation>
    <scope>NUCLEOTIDE SEQUENCE [LARGE SCALE GENOMIC DNA]</scope>
    <source>
        <strain>OSU18</strain>
    </source>
</reference>
<dbReference type="EMBL" id="CP000437">
    <property type="protein sequence ID" value="ABI82307.1"/>
    <property type="molecule type" value="Genomic_DNA"/>
</dbReference>
<dbReference type="SMR" id="Q0BNM7"/>
<dbReference type="KEGG" id="fth:FTH_0294"/>
<dbReference type="GO" id="GO:0005829">
    <property type="term" value="C:cytosol"/>
    <property type="evidence" value="ECO:0007669"/>
    <property type="project" value="TreeGrafter"/>
</dbReference>
<dbReference type="GO" id="GO:0005524">
    <property type="term" value="F:ATP binding"/>
    <property type="evidence" value="ECO:0007669"/>
    <property type="project" value="UniProtKB-UniRule"/>
</dbReference>
<dbReference type="GO" id="GO:0140664">
    <property type="term" value="F:ATP-dependent DNA damage sensor activity"/>
    <property type="evidence" value="ECO:0007669"/>
    <property type="project" value="InterPro"/>
</dbReference>
<dbReference type="GO" id="GO:0003684">
    <property type="term" value="F:damaged DNA binding"/>
    <property type="evidence" value="ECO:0007669"/>
    <property type="project" value="UniProtKB-UniRule"/>
</dbReference>
<dbReference type="GO" id="GO:0030983">
    <property type="term" value="F:mismatched DNA binding"/>
    <property type="evidence" value="ECO:0007669"/>
    <property type="project" value="InterPro"/>
</dbReference>
<dbReference type="GO" id="GO:0006298">
    <property type="term" value="P:mismatch repair"/>
    <property type="evidence" value="ECO:0007669"/>
    <property type="project" value="UniProtKB-UniRule"/>
</dbReference>
<dbReference type="FunFam" id="1.10.1420.10:FF:000002">
    <property type="entry name" value="DNA mismatch repair protein MutS"/>
    <property type="match status" value="1"/>
</dbReference>
<dbReference type="FunFam" id="3.40.1170.10:FF:000001">
    <property type="entry name" value="DNA mismatch repair protein MutS"/>
    <property type="match status" value="1"/>
</dbReference>
<dbReference type="FunFam" id="3.40.50.300:FF:000870">
    <property type="entry name" value="MutS protein homolog 4"/>
    <property type="match status" value="1"/>
</dbReference>
<dbReference type="Gene3D" id="1.10.1420.10">
    <property type="match status" value="2"/>
</dbReference>
<dbReference type="Gene3D" id="3.40.1170.10">
    <property type="entry name" value="DNA repair protein MutS, domain I"/>
    <property type="match status" value="1"/>
</dbReference>
<dbReference type="Gene3D" id="3.30.420.110">
    <property type="entry name" value="MutS, connector domain"/>
    <property type="match status" value="1"/>
</dbReference>
<dbReference type="Gene3D" id="3.40.50.300">
    <property type="entry name" value="P-loop containing nucleotide triphosphate hydrolases"/>
    <property type="match status" value="1"/>
</dbReference>
<dbReference type="HAMAP" id="MF_00096">
    <property type="entry name" value="MutS"/>
    <property type="match status" value="1"/>
</dbReference>
<dbReference type="InterPro" id="IPR005748">
    <property type="entry name" value="DNA_mismatch_repair_MutS"/>
</dbReference>
<dbReference type="InterPro" id="IPR007695">
    <property type="entry name" value="DNA_mismatch_repair_MutS-lik_N"/>
</dbReference>
<dbReference type="InterPro" id="IPR017261">
    <property type="entry name" value="DNA_mismatch_repair_MutS/MSH"/>
</dbReference>
<dbReference type="InterPro" id="IPR000432">
    <property type="entry name" value="DNA_mismatch_repair_MutS_C"/>
</dbReference>
<dbReference type="InterPro" id="IPR007861">
    <property type="entry name" value="DNA_mismatch_repair_MutS_clamp"/>
</dbReference>
<dbReference type="InterPro" id="IPR007696">
    <property type="entry name" value="DNA_mismatch_repair_MutS_core"/>
</dbReference>
<dbReference type="InterPro" id="IPR016151">
    <property type="entry name" value="DNA_mismatch_repair_MutS_N"/>
</dbReference>
<dbReference type="InterPro" id="IPR036187">
    <property type="entry name" value="DNA_mismatch_repair_MutS_sf"/>
</dbReference>
<dbReference type="InterPro" id="IPR007860">
    <property type="entry name" value="DNA_mmatch_repair_MutS_con_dom"/>
</dbReference>
<dbReference type="InterPro" id="IPR045076">
    <property type="entry name" value="MutS"/>
</dbReference>
<dbReference type="InterPro" id="IPR036678">
    <property type="entry name" value="MutS_con_dom_sf"/>
</dbReference>
<dbReference type="InterPro" id="IPR027417">
    <property type="entry name" value="P-loop_NTPase"/>
</dbReference>
<dbReference type="NCBIfam" id="TIGR01070">
    <property type="entry name" value="mutS1"/>
    <property type="match status" value="1"/>
</dbReference>
<dbReference type="NCBIfam" id="NF003810">
    <property type="entry name" value="PRK05399.1"/>
    <property type="match status" value="1"/>
</dbReference>
<dbReference type="PANTHER" id="PTHR11361:SF34">
    <property type="entry name" value="DNA MISMATCH REPAIR PROTEIN MSH1, MITOCHONDRIAL"/>
    <property type="match status" value="1"/>
</dbReference>
<dbReference type="PANTHER" id="PTHR11361">
    <property type="entry name" value="DNA MISMATCH REPAIR PROTEIN MUTS FAMILY MEMBER"/>
    <property type="match status" value="1"/>
</dbReference>
<dbReference type="Pfam" id="PF01624">
    <property type="entry name" value="MutS_I"/>
    <property type="match status" value="1"/>
</dbReference>
<dbReference type="Pfam" id="PF05188">
    <property type="entry name" value="MutS_II"/>
    <property type="match status" value="1"/>
</dbReference>
<dbReference type="Pfam" id="PF05192">
    <property type="entry name" value="MutS_III"/>
    <property type="match status" value="1"/>
</dbReference>
<dbReference type="Pfam" id="PF05190">
    <property type="entry name" value="MutS_IV"/>
    <property type="match status" value="1"/>
</dbReference>
<dbReference type="Pfam" id="PF00488">
    <property type="entry name" value="MutS_V"/>
    <property type="match status" value="1"/>
</dbReference>
<dbReference type="PIRSF" id="PIRSF037677">
    <property type="entry name" value="DNA_mis_repair_Msh6"/>
    <property type="match status" value="1"/>
</dbReference>
<dbReference type="SMART" id="SM00534">
    <property type="entry name" value="MUTSac"/>
    <property type="match status" value="1"/>
</dbReference>
<dbReference type="SMART" id="SM00533">
    <property type="entry name" value="MUTSd"/>
    <property type="match status" value="1"/>
</dbReference>
<dbReference type="SUPFAM" id="SSF55271">
    <property type="entry name" value="DNA repair protein MutS, domain I"/>
    <property type="match status" value="1"/>
</dbReference>
<dbReference type="SUPFAM" id="SSF53150">
    <property type="entry name" value="DNA repair protein MutS, domain II"/>
    <property type="match status" value="1"/>
</dbReference>
<dbReference type="SUPFAM" id="SSF48334">
    <property type="entry name" value="DNA repair protein MutS, domain III"/>
    <property type="match status" value="1"/>
</dbReference>
<dbReference type="SUPFAM" id="SSF52540">
    <property type="entry name" value="P-loop containing nucleoside triphosphate hydrolases"/>
    <property type="match status" value="1"/>
</dbReference>
<dbReference type="PROSITE" id="PS00486">
    <property type="entry name" value="DNA_MISMATCH_REPAIR_2"/>
    <property type="match status" value="1"/>
</dbReference>
<comment type="function">
    <text evidence="1">This protein is involved in the repair of mismatches in DNA. It is possible that it carries out the mismatch recognition step. This protein has a weak ATPase activity.</text>
</comment>
<comment type="similarity">
    <text evidence="1">Belongs to the DNA mismatch repair MutS family.</text>
</comment>
<protein>
    <recommendedName>
        <fullName evidence="1">DNA mismatch repair protein MutS</fullName>
    </recommendedName>
</protein>
<keyword id="KW-0067">ATP-binding</keyword>
<keyword id="KW-0227">DNA damage</keyword>
<keyword id="KW-0234">DNA repair</keyword>
<keyword id="KW-0238">DNA-binding</keyword>
<keyword id="KW-0547">Nucleotide-binding</keyword>
<feature type="chain" id="PRO_1000008062" description="DNA mismatch repair protein MutS">
    <location>
        <begin position="1"/>
        <end position="855"/>
    </location>
</feature>
<feature type="binding site" evidence="1">
    <location>
        <begin position="621"/>
        <end position="628"/>
    </location>
    <ligand>
        <name>ATP</name>
        <dbReference type="ChEBI" id="CHEBI:30616"/>
    </ligand>
</feature>
<evidence type="ECO:0000255" key="1">
    <source>
        <dbReference type="HAMAP-Rule" id="MF_00096"/>
    </source>
</evidence>
<organism>
    <name type="scientific">Francisella tularensis subsp. holarctica (strain OSU18)</name>
    <dbReference type="NCBI Taxonomy" id="393011"/>
    <lineage>
        <taxon>Bacteria</taxon>
        <taxon>Pseudomonadati</taxon>
        <taxon>Pseudomonadota</taxon>
        <taxon>Gammaproteobacteria</taxon>
        <taxon>Thiotrichales</taxon>
        <taxon>Francisellaceae</taxon>
        <taxon>Francisella</taxon>
    </lineage>
</organism>
<accession>Q0BNM7</accession>
<sequence length="855" mass="97164">MLTKRFYNLAIMQDISNHTPMIQQYLKIKSQYQDILLFYRMGDFYELFFDDAKKAAELLDITLTARGKSNGESIPMAGVPYHAAEAYIAKIVKKGLSIAICEQTGDPNTSKGPVERQVTRIITPATVSEEAFLDNNQDSILVSIFEKNNKYYLAYTSYTQGKIYLVKTLTSLNELKNTVLKLSPQEIITNSRELAQQNPFKKPIKALEEWYYSNFEAKKYINDSLDTNIANNILNLYKNDQLTTIGSILSYLTNILKDTPRHITDISYEQEQDTLNIDINSRINLELDNNSKSSLLSIIGKCKTSLGSRLLKRYFSNPTRNLNILATRHSIINSLGENQHFLKIQDVLSYISDIERIISRVALGTVKPKDLVALRYSLEQLPILKKLLSEKNTPEITNINNRIHQLDELVTLLDKAIIENPPTTIRDGGVIKEGFDKELDELKSIKDNSYDFLIKFEELQKQKIGISTLKVGYNRVHGYYIELSKQHADKIPTEYVRRQTLKASERYITEELKNFEDKVLSSKEKALAREKLIYDTLLKKVIEYYKQIQETAASIAEIDVLANFAERAIKLKLSQPKFNNLAKLELKEVRHLAIEHNIDEPFIPNDTLLSKDTNTLQIITGPNMGGKSTYMRQVAQLIFLAYIGSFVPASYADICDIDTIYTRIGASDDISSGRSTFMVEMTETAYILNNASAKSLVIMDEIGRGTSTFDGLALAKACAEKFAQMGAFTLFATHYFELTELAKQYPNVCNIHFEAKEYKDNIYFMHKAVTGAAKKSYGIQVAKLAGISQDVLESAKQNLYNLEKKQQLTESTQVQAQFQLEPTTQNPLQQKLDAIDINTITPLEALNILFELKKR</sequence>
<name>MUTS_FRATO</name>
<gene>
    <name evidence="1" type="primary">mutS</name>
    <name type="ordered locus">FTH_0294</name>
</gene>
<proteinExistence type="inferred from homology"/>